<protein>
    <recommendedName>
        <fullName evidence="1">Tyrosine--tRNA ligase</fullName>
        <ecNumber evidence="1">6.1.1.1</ecNumber>
    </recommendedName>
    <alternativeName>
        <fullName evidence="1">Tyrosyl-tRNA synthetase</fullName>
        <shortName evidence="1">TyrRS</shortName>
    </alternativeName>
</protein>
<sequence length="424" mass="47282">MASSNLIKQLQERGLVAQVTDEDALAERLAQGPIALYCGFDPTADSLHLGHLVPLLCLKRFQQAGHKPVALVGGATGLIGDPSFKAAERKLNTEETVQEWVAKIRKQVAPFLDFDCGENSAIAANNYDWFGSMNVLTFLRDIGKHFSVNQMINKEAVKQRLNRDDQGISFTEFSYNLLQGYDFACLNKLHGVALQIGGSDQWGNITSGIDLTRRLHQNQVFGLTVPLITKADGTKFGKTEGGAVWLDPKKTSPYKFYQFWINTADADVYRFLKFFTFMDIEEINALEEEDKNSGKAPRAQYVLAEQVTRLVHGEEGLVAAKRITECLFSGSLSALSEADFEQLAQDGVPMVEMEKGADLMQALVDAELQPSRGQARKTIASNAVTINGEKQSDPEYIFNDEDRLFGRYTLLRRGKKNYCLICWK</sequence>
<proteinExistence type="inferred from homology"/>
<dbReference type="EC" id="6.1.1.1" evidence="1"/>
<dbReference type="EMBL" id="CP001120">
    <property type="protein sequence ID" value="ACF66560.1"/>
    <property type="molecule type" value="Genomic_DNA"/>
</dbReference>
<dbReference type="RefSeq" id="WP_000168626.1">
    <property type="nucleotide sequence ID" value="NC_011083.1"/>
</dbReference>
<dbReference type="SMR" id="B4THC6"/>
<dbReference type="KEGG" id="seh:SeHA_C1619"/>
<dbReference type="HOGENOM" id="CLU_024003_0_3_6"/>
<dbReference type="Proteomes" id="UP000001866">
    <property type="component" value="Chromosome"/>
</dbReference>
<dbReference type="GO" id="GO:0005829">
    <property type="term" value="C:cytosol"/>
    <property type="evidence" value="ECO:0007669"/>
    <property type="project" value="TreeGrafter"/>
</dbReference>
<dbReference type="GO" id="GO:0005524">
    <property type="term" value="F:ATP binding"/>
    <property type="evidence" value="ECO:0007669"/>
    <property type="project" value="UniProtKB-UniRule"/>
</dbReference>
<dbReference type="GO" id="GO:0003723">
    <property type="term" value="F:RNA binding"/>
    <property type="evidence" value="ECO:0007669"/>
    <property type="project" value="UniProtKB-KW"/>
</dbReference>
<dbReference type="GO" id="GO:0004831">
    <property type="term" value="F:tyrosine-tRNA ligase activity"/>
    <property type="evidence" value="ECO:0007669"/>
    <property type="project" value="UniProtKB-UniRule"/>
</dbReference>
<dbReference type="GO" id="GO:0006437">
    <property type="term" value="P:tyrosyl-tRNA aminoacylation"/>
    <property type="evidence" value="ECO:0007669"/>
    <property type="project" value="UniProtKB-UniRule"/>
</dbReference>
<dbReference type="CDD" id="cd00165">
    <property type="entry name" value="S4"/>
    <property type="match status" value="1"/>
</dbReference>
<dbReference type="CDD" id="cd00805">
    <property type="entry name" value="TyrRS_core"/>
    <property type="match status" value="1"/>
</dbReference>
<dbReference type="FunFam" id="1.10.240.10:FF:000001">
    <property type="entry name" value="Tyrosine--tRNA ligase"/>
    <property type="match status" value="1"/>
</dbReference>
<dbReference type="FunFam" id="3.10.290.10:FF:000007">
    <property type="entry name" value="Tyrosine--tRNA ligase"/>
    <property type="match status" value="1"/>
</dbReference>
<dbReference type="FunFam" id="3.40.50.620:FF:000008">
    <property type="entry name" value="Tyrosine--tRNA ligase"/>
    <property type="match status" value="1"/>
</dbReference>
<dbReference type="Gene3D" id="3.40.50.620">
    <property type="entry name" value="HUPs"/>
    <property type="match status" value="1"/>
</dbReference>
<dbReference type="Gene3D" id="3.10.290.10">
    <property type="entry name" value="RNA-binding S4 domain"/>
    <property type="match status" value="1"/>
</dbReference>
<dbReference type="Gene3D" id="1.10.240.10">
    <property type="entry name" value="Tyrosyl-Transfer RNA Synthetase"/>
    <property type="match status" value="1"/>
</dbReference>
<dbReference type="HAMAP" id="MF_02006">
    <property type="entry name" value="Tyr_tRNA_synth_type1"/>
    <property type="match status" value="1"/>
</dbReference>
<dbReference type="InterPro" id="IPR001412">
    <property type="entry name" value="aa-tRNA-synth_I_CS"/>
</dbReference>
<dbReference type="InterPro" id="IPR002305">
    <property type="entry name" value="aa-tRNA-synth_Ic"/>
</dbReference>
<dbReference type="InterPro" id="IPR014729">
    <property type="entry name" value="Rossmann-like_a/b/a_fold"/>
</dbReference>
<dbReference type="InterPro" id="IPR002942">
    <property type="entry name" value="S4_RNA-bd"/>
</dbReference>
<dbReference type="InterPro" id="IPR036986">
    <property type="entry name" value="S4_RNA-bd_sf"/>
</dbReference>
<dbReference type="InterPro" id="IPR054608">
    <property type="entry name" value="SYY-like_C"/>
</dbReference>
<dbReference type="InterPro" id="IPR002307">
    <property type="entry name" value="Tyr-tRNA-ligase"/>
</dbReference>
<dbReference type="InterPro" id="IPR024088">
    <property type="entry name" value="Tyr-tRNA-ligase_bac-type"/>
</dbReference>
<dbReference type="InterPro" id="IPR024107">
    <property type="entry name" value="Tyr-tRNA-ligase_bac_1"/>
</dbReference>
<dbReference type="NCBIfam" id="TIGR00234">
    <property type="entry name" value="tyrS"/>
    <property type="match status" value="1"/>
</dbReference>
<dbReference type="PANTHER" id="PTHR11766:SF0">
    <property type="entry name" value="TYROSINE--TRNA LIGASE, MITOCHONDRIAL"/>
    <property type="match status" value="1"/>
</dbReference>
<dbReference type="PANTHER" id="PTHR11766">
    <property type="entry name" value="TYROSYL-TRNA SYNTHETASE"/>
    <property type="match status" value="1"/>
</dbReference>
<dbReference type="Pfam" id="PF22421">
    <property type="entry name" value="SYY_C-terminal"/>
    <property type="match status" value="1"/>
</dbReference>
<dbReference type="Pfam" id="PF00579">
    <property type="entry name" value="tRNA-synt_1b"/>
    <property type="match status" value="1"/>
</dbReference>
<dbReference type="PRINTS" id="PR01040">
    <property type="entry name" value="TRNASYNTHTYR"/>
</dbReference>
<dbReference type="SMART" id="SM00363">
    <property type="entry name" value="S4"/>
    <property type="match status" value="1"/>
</dbReference>
<dbReference type="SUPFAM" id="SSF55174">
    <property type="entry name" value="Alpha-L RNA-binding motif"/>
    <property type="match status" value="1"/>
</dbReference>
<dbReference type="SUPFAM" id="SSF52374">
    <property type="entry name" value="Nucleotidylyl transferase"/>
    <property type="match status" value="1"/>
</dbReference>
<dbReference type="PROSITE" id="PS00178">
    <property type="entry name" value="AA_TRNA_LIGASE_I"/>
    <property type="match status" value="1"/>
</dbReference>
<dbReference type="PROSITE" id="PS50889">
    <property type="entry name" value="S4"/>
    <property type="match status" value="1"/>
</dbReference>
<feature type="chain" id="PRO_1000189325" description="Tyrosine--tRNA ligase">
    <location>
        <begin position="1"/>
        <end position="424"/>
    </location>
</feature>
<feature type="domain" description="S4 RNA-binding" evidence="1">
    <location>
        <begin position="357"/>
        <end position="414"/>
    </location>
</feature>
<feature type="short sequence motif" description="'HIGH' region">
    <location>
        <begin position="42"/>
        <end position="51"/>
    </location>
</feature>
<feature type="short sequence motif" description="'KMSKS' region">
    <location>
        <begin position="235"/>
        <end position="239"/>
    </location>
</feature>
<feature type="binding site" evidence="1">
    <location>
        <position position="37"/>
    </location>
    <ligand>
        <name>L-tyrosine</name>
        <dbReference type="ChEBI" id="CHEBI:58315"/>
    </ligand>
</feature>
<feature type="binding site" evidence="1">
    <location>
        <position position="175"/>
    </location>
    <ligand>
        <name>L-tyrosine</name>
        <dbReference type="ChEBI" id="CHEBI:58315"/>
    </ligand>
</feature>
<feature type="binding site" evidence="1">
    <location>
        <position position="179"/>
    </location>
    <ligand>
        <name>L-tyrosine</name>
        <dbReference type="ChEBI" id="CHEBI:58315"/>
    </ligand>
</feature>
<feature type="binding site" evidence="1">
    <location>
        <position position="238"/>
    </location>
    <ligand>
        <name>ATP</name>
        <dbReference type="ChEBI" id="CHEBI:30616"/>
    </ligand>
</feature>
<keyword id="KW-0030">Aminoacyl-tRNA synthetase</keyword>
<keyword id="KW-0067">ATP-binding</keyword>
<keyword id="KW-0963">Cytoplasm</keyword>
<keyword id="KW-0436">Ligase</keyword>
<keyword id="KW-0547">Nucleotide-binding</keyword>
<keyword id="KW-0648">Protein biosynthesis</keyword>
<keyword id="KW-0694">RNA-binding</keyword>
<comment type="function">
    <text evidence="1">Catalyzes the attachment of tyrosine to tRNA(Tyr) in a two-step reaction: tyrosine is first activated by ATP to form Tyr-AMP and then transferred to the acceptor end of tRNA(Tyr).</text>
</comment>
<comment type="catalytic activity">
    <reaction evidence="1">
        <text>tRNA(Tyr) + L-tyrosine + ATP = L-tyrosyl-tRNA(Tyr) + AMP + diphosphate + H(+)</text>
        <dbReference type="Rhea" id="RHEA:10220"/>
        <dbReference type="Rhea" id="RHEA-COMP:9706"/>
        <dbReference type="Rhea" id="RHEA-COMP:9707"/>
        <dbReference type="ChEBI" id="CHEBI:15378"/>
        <dbReference type="ChEBI" id="CHEBI:30616"/>
        <dbReference type="ChEBI" id="CHEBI:33019"/>
        <dbReference type="ChEBI" id="CHEBI:58315"/>
        <dbReference type="ChEBI" id="CHEBI:78442"/>
        <dbReference type="ChEBI" id="CHEBI:78536"/>
        <dbReference type="ChEBI" id="CHEBI:456215"/>
        <dbReference type="EC" id="6.1.1.1"/>
    </reaction>
</comment>
<comment type="subunit">
    <text evidence="1">Homodimer.</text>
</comment>
<comment type="subcellular location">
    <subcellularLocation>
        <location evidence="1">Cytoplasm</location>
    </subcellularLocation>
</comment>
<comment type="similarity">
    <text evidence="1">Belongs to the class-I aminoacyl-tRNA synthetase family. TyrS type 1 subfamily.</text>
</comment>
<name>SYY_SALHS</name>
<reference key="1">
    <citation type="journal article" date="2011" name="J. Bacteriol.">
        <title>Comparative genomics of 28 Salmonella enterica isolates: evidence for CRISPR-mediated adaptive sublineage evolution.</title>
        <authorList>
            <person name="Fricke W.F."/>
            <person name="Mammel M.K."/>
            <person name="McDermott P.F."/>
            <person name="Tartera C."/>
            <person name="White D.G."/>
            <person name="Leclerc J.E."/>
            <person name="Ravel J."/>
            <person name="Cebula T.A."/>
        </authorList>
    </citation>
    <scope>NUCLEOTIDE SEQUENCE [LARGE SCALE GENOMIC DNA]</scope>
    <source>
        <strain>SL476</strain>
    </source>
</reference>
<organism>
    <name type="scientific">Salmonella heidelberg (strain SL476)</name>
    <dbReference type="NCBI Taxonomy" id="454169"/>
    <lineage>
        <taxon>Bacteria</taxon>
        <taxon>Pseudomonadati</taxon>
        <taxon>Pseudomonadota</taxon>
        <taxon>Gammaproteobacteria</taxon>
        <taxon>Enterobacterales</taxon>
        <taxon>Enterobacteriaceae</taxon>
        <taxon>Salmonella</taxon>
    </lineage>
</organism>
<gene>
    <name evidence="1" type="primary">tyrS</name>
    <name type="ordered locus">SeHA_C1619</name>
</gene>
<evidence type="ECO:0000255" key="1">
    <source>
        <dbReference type="HAMAP-Rule" id="MF_02006"/>
    </source>
</evidence>
<accession>B4THC6</accession>